<proteinExistence type="inferred from homology"/>
<feature type="chain" id="PRO_0000145690" description="Glyceraldehyde-3-phosphate dehydrogenase 1">
    <location>
        <begin position="1"/>
        <end position="336"/>
    </location>
</feature>
<feature type="active site" description="Nucleophile" evidence="2">
    <location>
        <position position="151"/>
    </location>
</feature>
<feature type="binding site" evidence="2">
    <location>
        <begin position="12"/>
        <end position="13"/>
    </location>
    <ligand>
        <name>NAD(+)</name>
        <dbReference type="ChEBI" id="CHEBI:57540"/>
    </ligand>
</feature>
<feature type="binding site" evidence="2">
    <location>
        <position position="34"/>
    </location>
    <ligand>
        <name>NAD(+)</name>
        <dbReference type="ChEBI" id="CHEBI:57540"/>
    </ligand>
</feature>
<feature type="binding site" evidence="2">
    <location>
        <position position="120"/>
    </location>
    <ligand>
        <name>NAD(+)</name>
        <dbReference type="ChEBI" id="CHEBI:57540"/>
    </ligand>
</feature>
<feature type="binding site" evidence="2">
    <location>
        <begin position="150"/>
        <end position="152"/>
    </location>
    <ligand>
        <name>D-glyceraldehyde 3-phosphate</name>
        <dbReference type="ChEBI" id="CHEBI:59776"/>
    </ligand>
</feature>
<feature type="binding site" evidence="2">
    <location>
        <position position="181"/>
    </location>
    <ligand>
        <name>D-glyceraldehyde 3-phosphate</name>
        <dbReference type="ChEBI" id="CHEBI:59776"/>
    </ligand>
</feature>
<feature type="binding site" evidence="1">
    <location>
        <position position="198"/>
    </location>
    <ligand>
        <name>D-glyceraldehyde 3-phosphate</name>
        <dbReference type="ChEBI" id="CHEBI:59776"/>
    </ligand>
</feature>
<feature type="binding site" evidence="2">
    <location>
        <begin position="211"/>
        <end position="212"/>
    </location>
    <ligand>
        <name>D-glyceraldehyde 3-phosphate</name>
        <dbReference type="ChEBI" id="CHEBI:59776"/>
    </ligand>
</feature>
<feature type="binding site" evidence="2">
    <location>
        <position position="234"/>
    </location>
    <ligand>
        <name>D-glyceraldehyde 3-phosphate</name>
        <dbReference type="ChEBI" id="CHEBI:59776"/>
    </ligand>
</feature>
<feature type="binding site" evidence="2">
    <location>
        <position position="316"/>
    </location>
    <ligand>
        <name>NAD(+)</name>
        <dbReference type="ChEBI" id="CHEBI:57540"/>
    </ligand>
</feature>
<feature type="site" description="Activates thiol group during catalysis" evidence="2">
    <location>
        <position position="178"/>
    </location>
</feature>
<organism>
    <name type="scientific">Staphylococcus epidermidis (strain ATCC 35984 / DSM 28319 / BCRC 17069 / CCUG 31568 / BM 3577 / RP62A)</name>
    <dbReference type="NCBI Taxonomy" id="176279"/>
    <lineage>
        <taxon>Bacteria</taxon>
        <taxon>Bacillati</taxon>
        <taxon>Bacillota</taxon>
        <taxon>Bacilli</taxon>
        <taxon>Bacillales</taxon>
        <taxon>Staphylococcaceae</taxon>
        <taxon>Staphylococcus</taxon>
    </lineage>
</organism>
<protein>
    <recommendedName>
        <fullName evidence="2">Glyceraldehyde-3-phosphate dehydrogenase 1</fullName>
        <shortName evidence="2">GAPDH 1</shortName>
        <ecNumber evidence="2">1.2.1.12</ecNumber>
    </recommendedName>
    <alternativeName>
        <fullName evidence="2">NAD-dependent glyceraldehyde-3-phosphate dehydrogenase</fullName>
    </alternativeName>
</protein>
<dbReference type="EC" id="1.2.1.12" evidence="2"/>
<dbReference type="EMBL" id="CP000029">
    <property type="protein sequence ID" value="AAW53873.1"/>
    <property type="molecule type" value="Genomic_DNA"/>
</dbReference>
<dbReference type="RefSeq" id="WP_001829667.1">
    <property type="nucleotide sequence ID" value="NC_002976.3"/>
</dbReference>
<dbReference type="SMR" id="Q5HQV4"/>
<dbReference type="STRING" id="176279.SERP0442"/>
<dbReference type="GeneID" id="50019295"/>
<dbReference type="KEGG" id="ser:SERP0442"/>
<dbReference type="eggNOG" id="COG0057">
    <property type="taxonomic scope" value="Bacteria"/>
</dbReference>
<dbReference type="HOGENOM" id="CLU_030140_0_2_9"/>
<dbReference type="UniPathway" id="UPA00109">
    <property type="reaction ID" value="UER00184"/>
</dbReference>
<dbReference type="Proteomes" id="UP000000531">
    <property type="component" value="Chromosome"/>
</dbReference>
<dbReference type="GO" id="GO:0005737">
    <property type="term" value="C:cytoplasm"/>
    <property type="evidence" value="ECO:0007669"/>
    <property type="project" value="UniProtKB-SubCell"/>
</dbReference>
<dbReference type="GO" id="GO:0004365">
    <property type="term" value="F:glyceraldehyde-3-phosphate dehydrogenase (NAD+) (phosphorylating) activity"/>
    <property type="evidence" value="ECO:0000250"/>
    <property type="project" value="UniProtKB"/>
</dbReference>
<dbReference type="GO" id="GO:0051287">
    <property type="term" value="F:NAD binding"/>
    <property type="evidence" value="ECO:0000250"/>
    <property type="project" value="UniProtKB"/>
</dbReference>
<dbReference type="GO" id="GO:0050661">
    <property type="term" value="F:NADP binding"/>
    <property type="evidence" value="ECO:0007669"/>
    <property type="project" value="InterPro"/>
</dbReference>
<dbReference type="GO" id="GO:0006006">
    <property type="term" value="P:glucose metabolic process"/>
    <property type="evidence" value="ECO:0007669"/>
    <property type="project" value="InterPro"/>
</dbReference>
<dbReference type="GO" id="GO:0006096">
    <property type="term" value="P:glycolytic process"/>
    <property type="evidence" value="ECO:0007669"/>
    <property type="project" value="UniProtKB-UniPathway"/>
</dbReference>
<dbReference type="CDD" id="cd18126">
    <property type="entry name" value="GAPDH_I_C"/>
    <property type="match status" value="1"/>
</dbReference>
<dbReference type="CDD" id="cd05214">
    <property type="entry name" value="GAPDH_I_N"/>
    <property type="match status" value="1"/>
</dbReference>
<dbReference type="FunFam" id="3.30.360.10:FF:000002">
    <property type="entry name" value="Glyceraldehyde-3-phosphate dehydrogenase"/>
    <property type="match status" value="1"/>
</dbReference>
<dbReference type="FunFam" id="3.40.50.720:FF:000001">
    <property type="entry name" value="Glyceraldehyde-3-phosphate dehydrogenase"/>
    <property type="match status" value="1"/>
</dbReference>
<dbReference type="Gene3D" id="3.30.360.10">
    <property type="entry name" value="Dihydrodipicolinate Reductase, domain 2"/>
    <property type="match status" value="1"/>
</dbReference>
<dbReference type="Gene3D" id="3.40.50.720">
    <property type="entry name" value="NAD(P)-binding Rossmann-like Domain"/>
    <property type="match status" value="1"/>
</dbReference>
<dbReference type="InterPro" id="IPR020831">
    <property type="entry name" value="GlycerAld/Erythrose_P_DH"/>
</dbReference>
<dbReference type="InterPro" id="IPR020830">
    <property type="entry name" value="GlycerAld_3-P_DH_AS"/>
</dbReference>
<dbReference type="InterPro" id="IPR020829">
    <property type="entry name" value="GlycerAld_3-P_DH_cat"/>
</dbReference>
<dbReference type="InterPro" id="IPR020828">
    <property type="entry name" value="GlycerAld_3-P_DH_NAD(P)-bd"/>
</dbReference>
<dbReference type="InterPro" id="IPR006424">
    <property type="entry name" value="Glyceraldehyde-3-P_DH_1"/>
</dbReference>
<dbReference type="InterPro" id="IPR036291">
    <property type="entry name" value="NAD(P)-bd_dom_sf"/>
</dbReference>
<dbReference type="NCBIfam" id="TIGR01534">
    <property type="entry name" value="GAPDH-I"/>
    <property type="match status" value="1"/>
</dbReference>
<dbReference type="PANTHER" id="PTHR43148">
    <property type="entry name" value="GLYCERALDEHYDE-3-PHOSPHATE DEHYDROGENASE 2"/>
    <property type="match status" value="1"/>
</dbReference>
<dbReference type="Pfam" id="PF02800">
    <property type="entry name" value="Gp_dh_C"/>
    <property type="match status" value="1"/>
</dbReference>
<dbReference type="Pfam" id="PF00044">
    <property type="entry name" value="Gp_dh_N"/>
    <property type="match status" value="1"/>
</dbReference>
<dbReference type="PIRSF" id="PIRSF000149">
    <property type="entry name" value="GAP_DH"/>
    <property type="match status" value="1"/>
</dbReference>
<dbReference type="PRINTS" id="PR00078">
    <property type="entry name" value="G3PDHDRGNASE"/>
</dbReference>
<dbReference type="SMART" id="SM00846">
    <property type="entry name" value="Gp_dh_N"/>
    <property type="match status" value="1"/>
</dbReference>
<dbReference type="SUPFAM" id="SSF55347">
    <property type="entry name" value="Glyceraldehyde-3-phosphate dehydrogenase-like, C-terminal domain"/>
    <property type="match status" value="1"/>
</dbReference>
<dbReference type="SUPFAM" id="SSF51735">
    <property type="entry name" value="NAD(P)-binding Rossmann-fold domains"/>
    <property type="match status" value="1"/>
</dbReference>
<dbReference type="PROSITE" id="PS00071">
    <property type="entry name" value="GAPDH"/>
    <property type="match status" value="1"/>
</dbReference>
<evidence type="ECO:0000250" key="1">
    <source>
        <dbReference type="UniProtKB" id="P00362"/>
    </source>
</evidence>
<evidence type="ECO:0000250" key="2">
    <source>
        <dbReference type="UniProtKB" id="Q6GIL8"/>
    </source>
</evidence>
<evidence type="ECO:0000305" key="3"/>
<reference key="1">
    <citation type="journal article" date="2005" name="J. Bacteriol.">
        <title>Insights on evolution of virulence and resistance from the complete genome analysis of an early methicillin-resistant Staphylococcus aureus strain and a biofilm-producing methicillin-resistant Staphylococcus epidermidis strain.</title>
        <authorList>
            <person name="Gill S.R."/>
            <person name="Fouts D.E."/>
            <person name="Archer G.L."/>
            <person name="Mongodin E.F."/>
            <person name="DeBoy R.T."/>
            <person name="Ravel J."/>
            <person name="Paulsen I.T."/>
            <person name="Kolonay J.F."/>
            <person name="Brinkac L.M."/>
            <person name="Beanan M.J."/>
            <person name="Dodson R.J."/>
            <person name="Daugherty S.C."/>
            <person name="Madupu R."/>
            <person name="Angiuoli S.V."/>
            <person name="Durkin A.S."/>
            <person name="Haft D.H."/>
            <person name="Vamathevan J.J."/>
            <person name="Khouri H."/>
            <person name="Utterback T.R."/>
            <person name="Lee C."/>
            <person name="Dimitrov G."/>
            <person name="Jiang L."/>
            <person name="Qin H."/>
            <person name="Weidman J."/>
            <person name="Tran K."/>
            <person name="Kang K.H."/>
            <person name="Hance I.R."/>
            <person name="Nelson K.E."/>
            <person name="Fraser C.M."/>
        </authorList>
    </citation>
    <scope>NUCLEOTIDE SEQUENCE [LARGE SCALE GENOMIC DNA]</scope>
    <source>
        <strain>ATCC 35984 / DSM 28319 / BCRC 17069 / CCUG 31568 / BM 3577 / RP62A</strain>
    </source>
</reference>
<sequence length="336" mass="36191">MAIKVAINGFGRIGRLAFRRIQDVEGLEVVAVNDLTDDDMLAHLLKYDTMQGRFTGEVEVIEGGFRVNGKEIKSFDEPDAGKLPWGDLDIDVVLECTGFYTDKEKAQAHIDAGAKKVLISAPAKGDVKTIVFNTNHDTLDGSETVVSGASCTTNSLAPVAKVLSDEFGLVEGFMTTIHAYTGDQNTQDAPHRKGDKRRARAAAENIIPNSTGAAKAIGKVIPEIDGKLDGGAQRVPVATGSLTELTVVLDKQDVTVDQVNSAMKQASDESFGYTEDEIVSSDIVGMTYGSLFDATQTRVMTVGDRQLVKVAAWYDNEMSYTAQLVRTLAHLAELSK</sequence>
<keyword id="KW-0963">Cytoplasm</keyword>
<keyword id="KW-0324">Glycolysis</keyword>
<keyword id="KW-0520">NAD</keyword>
<keyword id="KW-0547">Nucleotide-binding</keyword>
<keyword id="KW-0560">Oxidoreductase</keyword>
<keyword id="KW-1185">Reference proteome</keyword>
<accession>Q5HQV4</accession>
<name>G3P1_STAEQ</name>
<gene>
    <name type="primary">gapA1</name>
    <name type="synonym">gap</name>
    <name type="synonym">gapA</name>
    <name type="ordered locus">SERP0442</name>
</gene>
<comment type="function">
    <text evidence="2">Catalyzes the oxidative phosphorylation of glyceraldehyde 3-phosphate (G3P) to 1,3-bisphosphoglycerate (BPG) using the cofactor NAD. The first reaction step involves the formation of a hemiacetal intermediate between G3P and a cysteine residue, and this hemiacetal intermediate is then oxidized to a thioester, with concomitant reduction of NAD to NADH. The reduced NADH is then exchanged with the second NAD, and the thioester is attacked by a nucleophilic inorganic phosphate to produce BPG.</text>
</comment>
<comment type="catalytic activity">
    <reaction evidence="2">
        <text>D-glyceraldehyde 3-phosphate + phosphate + NAD(+) = (2R)-3-phospho-glyceroyl phosphate + NADH + H(+)</text>
        <dbReference type="Rhea" id="RHEA:10300"/>
        <dbReference type="ChEBI" id="CHEBI:15378"/>
        <dbReference type="ChEBI" id="CHEBI:43474"/>
        <dbReference type="ChEBI" id="CHEBI:57540"/>
        <dbReference type="ChEBI" id="CHEBI:57604"/>
        <dbReference type="ChEBI" id="CHEBI:57945"/>
        <dbReference type="ChEBI" id="CHEBI:59776"/>
        <dbReference type="EC" id="1.2.1.12"/>
    </reaction>
</comment>
<comment type="pathway">
    <text evidence="3">Carbohydrate degradation; glycolysis; pyruvate from D-glyceraldehyde 3-phosphate: step 1/5.</text>
</comment>
<comment type="subunit">
    <text evidence="2">Homotetramer.</text>
</comment>
<comment type="subcellular location">
    <subcellularLocation>
        <location evidence="3">Cytoplasm</location>
    </subcellularLocation>
</comment>
<comment type="similarity">
    <text evidence="3">Belongs to the glyceraldehyde-3-phosphate dehydrogenase family.</text>
</comment>